<sequence length="169" mass="18538">MVEPTGIEDVQEYDENSEEYPAEYTTETPETVGETYIPTAVGPSLGTGRRKTAVARVRVVPGTGEWKINGKSLEEYFPNKVHQQLIKEPLATLGFEGAYDVFARLNGGGTSGQAGALRHGLARALAAMDPEHNRPPLKKAGFLTRDARKVERKKAGLKKARKAPQYSKR</sequence>
<name>RS9_THEFY</name>
<dbReference type="EMBL" id="CP000088">
    <property type="protein sequence ID" value="AAZ56646.1"/>
    <property type="molecule type" value="Genomic_DNA"/>
</dbReference>
<dbReference type="RefSeq" id="WP_011293036.1">
    <property type="nucleotide sequence ID" value="NC_007333.1"/>
</dbReference>
<dbReference type="SMR" id="Q47LM6"/>
<dbReference type="STRING" id="269800.Tfu_2613"/>
<dbReference type="KEGG" id="tfu:Tfu_2613"/>
<dbReference type="eggNOG" id="COG0103">
    <property type="taxonomic scope" value="Bacteria"/>
</dbReference>
<dbReference type="HOGENOM" id="CLU_046483_2_0_11"/>
<dbReference type="OrthoDB" id="9803965at2"/>
<dbReference type="GO" id="GO:0005737">
    <property type="term" value="C:cytoplasm"/>
    <property type="evidence" value="ECO:0007669"/>
    <property type="project" value="UniProtKB-ARBA"/>
</dbReference>
<dbReference type="GO" id="GO:0015935">
    <property type="term" value="C:small ribosomal subunit"/>
    <property type="evidence" value="ECO:0007669"/>
    <property type="project" value="TreeGrafter"/>
</dbReference>
<dbReference type="GO" id="GO:0003723">
    <property type="term" value="F:RNA binding"/>
    <property type="evidence" value="ECO:0007669"/>
    <property type="project" value="TreeGrafter"/>
</dbReference>
<dbReference type="GO" id="GO:0003735">
    <property type="term" value="F:structural constituent of ribosome"/>
    <property type="evidence" value="ECO:0007669"/>
    <property type="project" value="InterPro"/>
</dbReference>
<dbReference type="GO" id="GO:0006412">
    <property type="term" value="P:translation"/>
    <property type="evidence" value="ECO:0007669"/>
    <property type="project" value="UniProtKB-UniRule"/>
</dbReference>
<dbReference type="FunFam" id="3.30.230.10:FF:000001">
    <property type="entry name" value="30S ribosomal protein S9"/>
    <property type="match status" value="1"/>
</dbReference>
<dbReference type="Gene3D" id="3.30.230.10">
    <property type="match status" value="1"/>
</dbReference>
<dbReference type="HAMAP" id="MF_00532_B">
    <property type="entry name" value="Ribosomal_uS9_B"/>
    <property type="match status" value="1"/>
</dbReference>
<dbReference type="InterPro" id="IPR020568">
    <property type="entry name" value="Ribosomal_Su5_D2-typ_SF"/>
</dbReference>
<dbReference type="InterPro" id="IPR000754">
    <property type="entry name" value="Ribosomal_uS9"/>
</dbReference>
<dbReference type="InterPro" id="IPR023035">
    <property type="entry name" value="Ribosomal_uS9_bac/plastid"/>
</dbReference>
<dbReference type="InterPro" id="IPR020574">
    <property type="entry name" value="Ribosomal_uS9_CS"/>
</dbReference>
<dbReference type="InterPro" id="IPR014721">
    <property type="entry name" value="Ribsml_uS5_D2-typ_fold_subgr"/>
</dbReference>
<dbReference type="NCBIfam" id="NF001099">
    <property type="entry name" value="PRK00132.1"/>
    <property type="match status" value="1"/>
</dbReference>
<dbReference type="PANTHER" id="PTHR21569">
    <property type="entry name" value="RIBOSOMAL PROTEIN S9"/>
    <property type="match status" value="1"/>
</dbReference>
<dbReference type="PANTHER" id="PTHR21569:SF1">
    <property type="entry name" value="SMALL RIBOSOMAL SUBUNIT PROTEIN US9M"/>
    <property type="match status" value="1"/>
</dbReference>
<dbReference type="Pfam" id="PF00380">
    <property type="entry name" value="Ribosomal_S9"/>
    <property type="match status" value="1"/>
</dbReference>
<dbReference type="SUPFAM" id="SSF54211">
    <property type="entry name" value="Ribosomal protein S5 domain 2-like"/>
    <property type="match status" value="1"/>
</dbReference>
<dbReference type="PROSITE" id="PS00360">
    <property type="entry name" value="RIBOSOMAL_S9"/>
    <property type="match status" value="1"/>
</dbReference>
<organism>
    <name type="scientific">Thermobifida fusca (strain YX)</name>
    <dbReference type="NCBI Taxonomy" id="269800"/>
    <lineage>
        <taxon>Bacteria</taxon>
        <taxon>Bacillati</taxon>
        <taxon>Actinomycetota</taxon>
        <taxon>Actinomycetes</taxon>
        <taxon>Streptosporangiales</taxon>
        <taxon>Nocardiopsidaceae</taxon>
        <taxon>Thermobifida</taxon>
    </lineage>
</organism>
<gene>
    <name evidence="1" type="primary">rpsI</name>
    <name type="ordered locus">Tfu_2613</name>
</gene>
<evidence type="ECO:0000255" key="1">
    <source>
        <dbReference type="HAMAP-Rule" id="MF_00532"/>
    </source>
</evidence>
<evidence type="ECO:0000256" key="2">
    <source>
        <dbReference type="SAM" id="MobiDB-lite"/>
    </source>
</evidence>
<evidence type="ECO:0000305" key="3"/>
<protein>
    <recommendedName>
        <fullName evidence="1">Small ribosomal subunit protein uS9</fullName>
    </recommendedName>
    <alternativeName>
        <fullName evidence="3">30S ribosomal protein S9</fullName>
    </alternativeName>
</protein>
<keyword id="KW-0687">Ribonucleoprotein</keyword>
<keyword id="KW-0689">Ribosomal protein</keyword>
<proteinExistence type="inferred from homology"/>
<comment type="similarity">
    <text evidence="1">Belongs to the universal ribosomal protein uS9 family.</text>
</comment>
<accession>Q47LM6</accession>
<reference key="1">
    <citation type="journal article" date="2007" name="J. Bacteriol.">
        <title>Genome sequence and analysis of the soil cellulolytic actinomycete Thermobifida fusca YX.</title>
        <authorList>
            <person name="Lykidis A."/>
            <person name="Mavromatis K."/>
            <person name="Ivanova N."/>
            <person name="Anderson I."/>
            <person name="Land M."/>
            <person name="DiBartolo G."/>
            <person name="Martinez M."/>
            <person name="Lapidus A."/>
            <person name="Lucas S."/>
            <person name="Copeland A."/>
            <person name="Richardson P."/>
            <person name="Wilson D.B."/>
            <person name="Kyrpides N."/>
        </authorList>
    </citation>
    <scope>NUCLEOTIDE SEQUENCE [LARGE SCALE GENOMIC DNA]</scope>
    <source>
        <strain>YX</strain>
    </source>
</reference>
<feature type="chain" id="PRO_1000128188" description="Small ribosomal subunit protein uS9">
    <location>
        <begin position="1"/>
        <end position="169"/>
    </location>
</feature>
<feature type="region of interest" description="Disordered" evidence="2">
    <location>
        <begin position="1"/>
        <end position="29"/>
    </location>
</feature>
<feature type="region of interest" description="Disordered" evidence="2">
    <location>
        <begin position="128"/>
        <end position="169"/>
    </location>
</feature>
<feature type="compositionally biased region" description="Acidic residues" evidence="2">
    <location>
        <begin position="9"/>
        <end position="21"/>
    </location>
</feature>
<feature type="compositionally biased region" description="Basic residues" evidence="2">
    <location>
        <begin position="150"/>
        <end position="169"/>
    </location>
</feature>